<keyword id="KW-0143">Chaperone</keyword>
<keyword id="KW-0963">Cytoplasm</keyword>
<keyword id="KW-1185">Reference proteome</keyword>
<keyword id="KW-0690">Ribosome biogenesis</keyword>
<keyword id="KW-0698">rRNA processing</keyword>
<feature type="chain" id="PRO_0000163358" description="Ribosome maturation factor RimM">
    <location>
        <begin position="1"/>
        <end position="167"/>
    </location>
</feature>
<feature type="domain" description="PRC barrel" evidence="1">
    <location>
        <begin position="94"/>
        <end position="165"/>
    </location>
</feature>
<dbReference type="EMBL" id="CP000029">
    <property type="protein sequence ID" value="AAW54144.1"/>
    <property type="molecule type" value="Genomic_DNA"/>
</dbReference>
<dbReference type="RefSeq" id="WP_002446276.1">
    <property type="nucleotide sequence ID" value="NC_002976.3"/>
</dbReference>
<dbReference type="SMR" id="Q5HPV2"/>
<dbReference type="STRING" id="176279.SERP0805"/>
<dbReference type="KEGG" id="ser:SERP0805"/>
<dbReference type="eggNOG" id="COG0806">
    <property type="taxonomic scope" value="Bacteria"/>
</dbReference>
<dbReference type="HOGENOM" id="CLU_077636_3_1_9"/>
<dbReference type="Proteomes" id="UP000000531">
    <property type="component" value="Chromosome"/>
</dbReference>
<dbReference type="GO" id="GO:0005737">
    <property type="term" value="C:cytoplasm"/>
    <property type="evidence" value="ECO:0007669"/>
    <property type="project" value="UniProtKB-SubCell"/>
</dbReference>
<dbReference type="GO" id="GO:0005840">
    <property type="term" value="C:ribosome"/>
    <property type="evidence" value="ECO:0007669"/>
    <property type="project" value="InterPro"/>
</dbReference>
<dbReference type="GO" id="GO:0043022">
    <property type="term" value="F:ribosome binding"/>
    <property type="evidence" value="ECO:0007669"/>
    <property type="project" value="InterPro"/>
</dbReference>
<dbReference type="GO" id="GO:0042274">
    <property type="term" value="P:ribosomal small subunit biogenesis"/>
    <property type="evidence" value="ECO:0007669"/>
    <property type="project" value="UniProtKB-UniRule"/>
</dbReference>
<dbReference type="GO" id="GO:0006364">
    <property type="term" value="P:rRNA processing"/>
    <property type="evidence" value="ECO:0007669"/>
    <property type="project" value="UniProtKB-UniRule"/>
</dbReference>
<dbReference type="Gene3D" id="2.30.30.240">
    <property type="entry name" value="PRC-barrel domain"/>
    <property type="match status" value="1"/>
</dbReference>
<dbReference type="Gene3D" id="2.40.30.60">
    <property type="entry name" value="RimM"/>
    <property type="match status" value="1"/>
</dbReference>
<dbReference type="HAMAP" id="MF_00014">
    <property type="entry name" value="Ribosome_mat_RimM"/>
    <property type="match status" value="1"/>
</dbReference>
<dbReference type="InterPro" id="IPR011033">
    <property type="entry name" value="PRC_barrel-like_sf"/>
</dbReference>
<dbReference type="InterPro" id="IPR056792">
    <property type="entry name" value="PRC_RimM"/>
</dbReference>
<dbReference type="InterPro" id="IPR011961">
    <property type="entry name" value="RimM"/>
</dbReference>
<dbReference type="InterPro" id="IPR002676">
    <property type="entry name" value="RimM_N"/>
</dbReference>
<dbReference type="InterPro" id="IPR036976">
    <property type="entry name" value="RimM_N_sf"/>
</dbReference>
<dbReference type="InterPro" id="IPR009000">
    <property type="entry name" value="Transl_B-barrel_sf"/>
</dbReference>
<dbReference type="NCBIfam" id="TIGR02273">
    <property type="entry name" value="16S_RimM"/>
    <property type="match status" value="1"/>
</dbReference>
<dbReference type="PANTHER" id="PTHR33692">
    <property type="entry name" value="RIBOSOME MATURATION FACTOR RIMM"/>
    <property type="match status" value="1"/>
</dbReference>
<dbReference type="PANTHER" id="PTHR33692:SF1">
    <property type="entry name" value="RIBOSOME MATURATION FACTOR RIMM"/>
    <property type="match status" value="1"/>
</dbReference>
<dbReference type="Pfam" id="PF24986">
    <property type="entry name" value="PRC_RimM"/>
    <property type="match status" value="1"/>
</dbReference>
<dbReference type="Pfam" id="PF01782">
    <property type="entry name" value="RimM"/>
    <property type="match status" value="1"/>
</dbReference>
<dbReference type="SUPFAM" id="SSF50346">
    <property type="entry name" value="PRC-barrel domain"/>
    <property type="match status" value="1"/>
</dbReference>
<dbReference type="SUPFAM" id="SSF50447">
    <property type="entry name" value="Translation proteins"/>
    <property type="match status" value="1"/>
</dbReference>
<evidence type="ECO:0000255" key="1">
    <source>
        <dbReference type="HAMAP-Rule" id="MF_00014"/>
    </source>
</evidence>
<sequence length="167" mass="19394">MEVEVGQIVNTHGIKGEVKVKSNSDFTETRFQPGEQLLVKHNNTEIVYTVDSYRIHKGFHMLRFEGINNINDIEHLKGDYIYQERDHQDIELGEHEYYYSDIIGCTVFKDDDTPIGRVINIFETGANDVWIVKGEKEYLIPYIEDVVKDIDIENKTIKITPMEGLLD</sequence>
<accession>Q5HPV2</accession>
<name>RIMM_STAEQ</name>
<reference key="1">
    <citation type="journal article" date="2005" name="J. Bacteriol.">
        <title>Insights on evolution of virulence and resistance from the complete genome analysis of an early methicillin-resistant Staphylococcus aureus strain and a biofilm-producing methicillin-resistant Staphylococcus epidermidis strain.</title>
        <authorList>
            <person name="Gill S.R."/>
            <person name="Fouts D.E."/>
            <person name="Archer G.L."/>
            <person name="Mongodin E.F."/>
            <person name="DeBoy R.T."/>
            <person name="Ravel J."/>
            <person name="Paulsen I.T."/>
            <person name="Kolonay J.F."/>
            <person name="Brinkac L.M."/>
            <person name="Beanan M.J."/>
            <person name="Dodson R.J."/>
            <person name="Daugherty S.C."/>
            <person name="Madupu R."/>
            <person name="Angiuoli S.V."/>
            <person name="Durkin A.S."/>
            <person name="Haft D.H."/>
            <person name="Vamathevan J.J."/>
            <person name="Khouri H."/>
            <person name="Utterback T.R."/>
            <person name="Lee C."/>
            <person name="Dimitrov G."/>
            <person name="Jiang L."/>
            <person name="Qin H."/>
            <person name="Weidman J."/>
            <person name="Tran K."/>
            <person name="Kang K.H."/>
            <person name="Hance I.R."/>
            <person name="Nelson K.E."/>
            <person name="Fraser C.M."/>
        </authorList>
    </citation>
    <scope>NUCLEOTIDE SEQUENCE [LARGE SCALE GENOMIC DNA]</scope>
    <source>
        <strain>ATCC 35984 / DSM 28319 / BCRC 17069 / CCUG 31568 / BM 3577 / RP62A</strain>
    </source>
</reference>
<protein>
    <recommendedName>
        <fullName evidence="1">Ribosome maturation factor RimM</fullName>
    </recommendedName>
</protein>
<gene>
    <name evidence="1" type="primary">rimM</name>
    <name type="ordered locus">SERP0805</name>
</gene>
<proteinExistence type="inferred from homology"/>
<comment type="function">
    <text evidence="1">An accessory protein needed during the final step in the assembly of 30S ribosomal subunit, possibly for assembly of the head region. Essential for efficient processing of 16S rRNA. May be needed both before and after RbfA during the maturation of 16S rRNA. It has affinity for free ribosomal 30S subunits but not for 70S ribosomes.</text>
</comment>
<comment type="subunit">
    <text evidence="1">Binds ribosomal protein uS19.</text>
</comment>
<comment type="subcellular location">
    <subcellularLocation>
        <location evidence="1">Cytoplasm</location>
    </subcellularLocation>
</comment>
<comment type="domain">
    <text evidence="1">The PRC barrel domain binds ribosomal protein uS19.</text>
</comment>
<comment type="similarity">
    <text evidence="1">Belongs to the RimM family.</text>
</comment>
<organism>
    <name type="scientific">Staphylococcus epidermidis (strain ATCC 35984 / DSM 28319 / BCRC 17069 / CCUG 31568 / BM 3577 / RP62A)</name>
    <dbReference type="NCBI Taxonomy" id="176279"/>
    <lineage>
        <taxon>Bacteria</taxon>
        <taxon>Bacillati</taxon>
        <taxon>Bacillota</taxon>
        <taxon>Bacilli</taxon>
        <taxon>Bacillales</taxon>
        <taxon>Staphylococcaceae</taxon>
        <taxon>Staphylococcus</taxon>
    </lineage>
</organism>